<feature type="chain" id="PRO_0000364461" description="Fructose-1,6-bisphosphatase class 1">
    <location>
        <begin position="1"/>
        <end position="331"/>
    </location>
</feature>
<feature type="binding site" evidence="1">
    <location>
        <position position="100"/>
    </location>
    <ligand>
        <name>Mg(2+)</name>
        <dbReference type="ChEBI" id="CHEBI:18420"/>
        <label>1</label>
    </ligand>
</feature>
<feature type="binding site" evidence="1">
    <location>
        <position position="120"/>
    </location>
    <ligand>
        <name>Mg(2+)</name>
        <dbReference type="ChEBI" id="CHEBI:18420"/>
        <label>1</label>
    </ligand>
</feature>
<feature type="binding site" evidence="1">
    <location>
        <position position="120"/>
    </location>
    <ligand>
        <name>Mg(2+)</name>
        <dbReference type="ChEBI" id="CHEBI:18420"/>
        <label>2</label>
    </ligand>
</feature>
<feature type="binding site" evidence="1">
    <location>
        <position position="122"/>
    </location>
    <ligand>
        <name>Mg(2+)</name>
        <dbReference type="ChEBI" id="CHEBI:18420"/>
        <label>1</label>
    </ligand>
</feature>
<feature type="binding site" evidence="1">
    <location>
        <begin position="123"/>
        <end position="126"/>
    </location>
    <ligand>
        <name>substrate</name>
    </ligand>
</feature>
<feature type="binding site" evidence="1">
    <location>
        <position position="123"/>
    </location>
    <ligand>
        <name>Mg(2+)</name>
        <dbReference type="ChEBI" id="CHEBI:18420"/>
        <label>2</label>
    </ligand>
</feature>
<feature type="binding site" evidence="1">
    <location>
        <position position="216"/>
    </location>
    <ligand>
        <name>substrate</name>
    </ligand>
</feature>
<feature type="binding site" evidence="1">
    <location>
        <position position="243"/>
    </location>
    <ligand>
        <name>substrate</name>
    </ligand>
</feature>
<feature type="binding site" evidence="1">
    <location>
        <begin position="261"/>
        <end position="263"/>
    </location>
    <ligand>
        <name>substrate</name>
    </ligand>
</feature>
<feature type="binding site" evidence="1">
    <location>
        <position position="273"/>
    </location>
    <ligand>
        <name>substrate</name>
    </ligand>
</feature>
<feature type="binding site" evidence="1">
    <location>
        <position position="279"/>
    </location>
    <ligand>
        <name>Mg(2+)</name>
        <dbReference type="ChEBI" id="CHEBI:18420"/>
        <label>2</label>
    </ligand>
</feature>
<accession>B3ERE1</accession>
<comment type="catalytic activity">
    <reaction evidence="1">
        <text>beta-D-fructose 1,6-bisphosphate + H2O = beta-D-fructose 6-phosphate + phosphate</text>
        <dbReference type="Rhea" id="RHEA:11064"/>
        <dbReference type="ChEBI" id="CHEBI:15377"/>
        <dbReference type="ChEBI" id="CHEBI:32966"/>
        <dbReference type="ChEBI" id="CHEBI:43474"/>
        <dbReference type="ChEBI" id="CHEBI:57634"/>
        <dbReference type="EC" id="3.1.3.11"/>
    </reaction>
</comment>
<comment type="cofactor">
    <cofactor evidence="1">
        <name>Mg(2+)</name>
        <dbReference type="ChEBI" id="CHEBI:18420"/>
    </cofactor>
    <text evidence="1">Binds 2 magnesium ions per subunit.</text>
</comment>
<comment type="pathway">
    <text evidence="1">Carbohydrate biosynthesis; gluconeogenesis.</text>
</comment>
<comment type="subunit">
    <text evidence="1">Homotetramer.</text>
</comment>
<comment type="subcellular location">
    <subcellularLocation>
        <location evidence="1">Cytoplasm</location>
    </subcellularLocation>
</comment>
<comment type="similarity">
    <text evidence="1">Belongs to the FBPase class 1 family.</text>
</comment>
<evidence type="ECO:0000255" key="1">
    <source>
        <dbReference type="HAMAP-Rule" id="MF_01855"/>
    </source>
</evidence>
<reference key="1">
    <citation type="journal article" date="2010" name="J. Bacteriol.">
        <title>The genome of the amoeba symbiont 'Candidatus Amoebophilus asiaticus' reveals common mechanisms for host cell interaction among amoeba-associated bacteria.</title>
        <authorList>
            <person name="Schmitz-Esser S."/>
            <person name="Tischler P."/>
            <person name="Arnold R."/>
            <person name="Montanaro J."/>
            <person name="Wagner M."/>
            <person name="Rattei T."/>
            <person name="Horn M."/>
        </authorList>
    </citation>
    <scope>NUCLEOTIDE SEQUENCE [LARGE SCALE GENOMIC DNA]</scope>
    <source>
        <strain>5a2</strain>
    </source>
</reference>
<protein>
    <recommendedName>
        <fullName evidence="1">Fructose-1,6-bisphosphatase class 1</fullName>
        <shortName evidence="1">FBPase class 1</shortName>
        <ecNumber evidence="1">3.1.3.11</ecNumber>
    </recommendedName>
    <alternativeName>
        <fullName evidence="1">D-fructose-1,6-bisphosphate 1-phosphohydrolase class 1</fullName>
    </alternativeName>
</protein>
<sequence>MPESQDIISQSIPSLTQFLGEEQARFPNIPTAIPIIIQAMATSARFISKAVVQSMIDKDVSFTESLNCSGDTQQKLDIVAQSFFLEALEATHEVCAVISEEADSVVPLRNKNARYIVALDPLDGSSNINVNSPIGTLFSIYQRISPSETPIQDADVLIPGKQQLAAGYMLYSTVNTLVYATIYGVHGFTYDPTVNQFFLTHPALRMPENGITYAINHSYLHTFPHYIQNYIAYCRRQELTSRYTGALVADFHRHLLEGGIYLYPPTYKRPKGKLRLMFECNVLAFIAEQAGGLATDGKQPILNIIPRHIHQCVPFYIGSKTMVKNLLNCVG</sequence>
<dbReference type="EC" id="3.1.3.11" evidence="1"/>
<dbReference type="EMBL" id="CP001102">
    <property type="protein sequence ID" value="ACE05793.1"/>
    <property type="molecule type" value="Genomic_DNA"/>
</dbReference>
<dbReference type="RefSeq" id="WP_012472554.1">
    <property type="nucleotide sequence ID" value="NC_010830.1"/>
</dbReference>
<dbReference type="SMR" id="B3ERE1"/>
<dbReference type="STRING" id="452471.Aasi_0370"/>
<dbReference type="KEGG" id="aas:Aasi_0370"/>
<dbReference type="eggNOG" id="COG0158">
    <property type="taxonomic scope" value="Bacteria"/>
</dbReference>
<dbReference type="HOGENOM" id="CLU_039977_2_2_10"/>
<dbReference type="OrthoDB" id="9806756at2"/>
<dbReference type="UniPathway" id="UPA00138"/>
<dbReference type="Proteomes" id="UP000001227">
    <property type="component" value="Chromosome"/>
</dbReference>
<dbReference type="GO" id="GO:0005829">
    <property type="term" value="C:cytosol"/>
    <property type="evidence" value="ECO:0007669"/>
    <property type="project" value="TreeGrafter"/>
</dbReference>
<dbReference type="GO" id="GO:0042132">
    <property type="term" value="F:fructose 1,6-bisphosphate 1-phosphatase activity"/>
    <property type="evidence" value="ECO:0007669"/>
    <property type="project" value="UniProtKB-UniRule"/>
</dbReference>
<dbReference type="GO" id="GO:0000287">
    <property type="term" value="F:magnesium ion binding"/>
    <property type="evidence" value="ECO:0007669"/>
    <property type="project" value="UniProtKB-UniRule"/>
</dbReference>
<dbReference type="GO" id="GO:0030388">
    <property type="term" value="P:fructose 1,6-bisphosphate metabolic process"/>
    <property type="evidence" value="ECO:0007669"/>
    <property type="project" value="TreeGrafter"/>
</dbReference>
<dbReference type="GO" id="GO:0006002">
    <property type="term" value="P:fructose 6-phosphate metabolic process"/>
    <property type="evidence" value="ECO:0007669"/>
    <property type="project" value="TreeGrafter"/>
</dbReference>
<dbReference type="GO" id="GO:0006000">
    <property type="term" value="P:fructose metabolic process"/>
    <property type="evidence" value="ECO:0007669"/>
    <property type="project" value="TreeGrafter"/>
</dbReference>
<dbReference type="GO" id="GO:0006094">
    <property type="term" value="P:gluconeogenesis"/>
    <property type="evidence" value="ECO:0007669"/>
    <property type="project" value="UniProtKB-UniRule"/>
</dbReference>
<dbReference type="GO" id="GO:0005986">
    <property type="term" value="P:sucrose biosynthetic process"/>
    <property type="evidence" value="ECO:0007669"/>
    <property type="project" value="TreeGrafter"/>
</dbReference>
<dbReference type="CDD" id="cd00354">
    <property type="entry name" value="FBPase"/>
    <property type="match status" value="1"/>
</dbReference>
<dbReference type="Gene3D" id="3.40.190.80">
    <property type="match status" value="1"/>
</dbReference>
<dbReference type="Gene3D" id="3.30.540.10">
    <property type="entry name" value="Fructose-1,6-Bisphosphatase, subunit A, domain 1"/>
    <property type="match status" value="1"/>
</dbReference>
<dbReference type="HAMAP" id="MF_01855">
    <property type="entry name" value="FBPase_class1"/>
    <property type="match status" value="1"/>
</dbReference>
<dbReference type="InterPro" id="IPR044015">
    <property type="entry name" value="FBPase_C_dom"/>
</dbReference>
<dbReference type="InterPro" id="IPR000146">
    <property type="entry name" value="FBPase_class-1"/>
</dbReference>
<dbReference type="InterPro" id="IPR033391">
    <property type="entry name" value="FBPase_N"/>
</dbReference>
<dbReference type="InterPro" id="IPR028343">
    <property type="entry name" value="FBPtase"/>
</dbReference>
<dbReference type="NCBIfam" id="NF006778">
    <property type="entry name" value="PRK09293.1-1"/>
    <property type="match status" value="1"/>
</dbReference>
<dbReference type="PANTHER" id="PTHR11556">
    <property type="entry name" value="FRUCTOSE-1,6-BISPHOSPHATASE-RELATED"/>
    <property type="match status" value="1"/>
</dbReference>
<dbReference type="PANTHER" id="PTHR11556:SF35">
    <property type="entry name" value="SEDOHEPTULOSE-1,7-BISPHOSPHATASE, CHLOROPLASTIC"/>
    <property type="match status" value="1"/>
</dbReference>
<dbReference type="Pfam" id="PF00316">
    <property type="entry name" value="FBPase"/>
    <property type="match status" value="1"/>
</dbReference>
<dbReference type="Pfam" id="PF18913">
    <property type="entry name" value="FBPase_C"/>
    <property type="match status" value="1"/>
</dbReference>
<dbReference type="PIRSF" id="PIRSF500210">
    <property type="entry name" value="FBPtase"/>
    <property type="match status" value="1"/>
</dbReference>
<dbReference type="PIRSF" id="PIRSF000904">
    <property type="entry name" value="FBPtase_SBPase"/>
    <property type="match status" value="1"/>
</dbReference>
<dbReference type="PRINTS" id="PR00115">
    <property type="entry name" value="F16BPHPHTASE"/>
</dbReference>
<dbReference type="SUPFAM" id="SSF56655">
    <property type="entry name" value="Carbohydrate phosphatase"/>
    <property type="match status" value="1"/>
</dbReference>
<proteinExistence type="inferred from homology"/>
<organism>
    <name type="scientific">Amoebophilus asiaticus (strain 5a2)</name>
    <dbReference type="NCBI Taxonomy" id="452471"/>
    <lineage>
        <taxon>Bacteria</taxon>
        <taxon>Pseudomonadati</taxon>
        <taxon>Bacteroidota</taxon>
        <taxon>Cytophagia</taxon>
        <taxon>Cytophagales</taxon>
        <taxon>Amoebophilaceae</taxon>
        <taxon>Candidatus Amoebophilus</taxon>
    </lineage>
</organism>
<keyword id="KW-0119">Carbohydrate metabolism</keyword>
<keyword id="KW-0963">Cytoplasm</keyword>
<keyword id="KW-0378">Hydrolase</keyword>
<keyword id="KW-0460">Magnesium</keyword>
<keyword id="KW-0479">Metal-binding</keyword>
<keyword id="KW-1185">Reference proteome</keyword>
<name>F16PA_AMOA5</name>
<gene>
    <name evidence="1" type="primary">fbp</name>
    <name type="ordered locus">Aasi_0370</name>
</gene>